<feature type="chain" id="PRO_0000196530" description="Fumarate reductase subunit C">
    <location>
        <begin position="1"/>
        <end position="132"/>
    </location>
</feature>
<feature type="transmembrane region" description="Helical" evidence="1">
    <location>
        <begin position="30"/>
        <end position="50"/>
    </location>
</feature>
<feature type="transmembrane region" description="Helical" evidence="1">
    <location>
        <begin position="70"/>
        <end position="90"/>
    </location>
</feature>
<feature type="transmembrane region" description="Helical" evidence="1">
    <location>
        <begin position="110"/>
        <end position="130"/>
    </location>
</feature>
<protein>
    <recommendedName>
        <fullName evidence="1">Fumarate reductase subunit C</fullName>
    </recommendedName>
    <alternativeName>
        <fullName evidence="1">Quinol-fumarate reductase subunit C</fullName>
        <shortName evidence="1">QFR subunit C</shortName>
    </alternativeName>
</protein>
<sequence length="132" mass="15265">MSKRKKYVRPMTATWWQKLDFYKAYMLREATSVFAVWFCIVLLYGVLCFASNPMPGLGILSFIEFLRNPIVVFLNIITLIATLYHTVTYFLMTPKVMNIIVKNERLPHTVVRNALWAVTALVSVIALVLVYI</sequence>
<accession>P44892</accession>
<proteinExistence type="inferred from homology"/>
<dbReference type="EMBL" id="L42023">
    <property type="protein sequence ID" value="AAC22491.1"/>
    <property type="molecule type" value="Genomic_DNA"/>
</dbReference>
<dbReference type="PIR" id="F64097">
    <property type="entry name" value="F64097"/>
</dbReference>
<dbReference type="RefSeq" id="NP_438993.2">
    <property type="nucleotide sequence ID" value="NC_000907.1"/>
</dbReference>
<dbReference type="SMR" id="P44892"/>
<dbReference type="STRING" id="71421.HI_0833"/>
<dbReference type="EnsemblBacteria" id="AAC22491">
    <property type="protein sequence ID" value="AAC22491"/>
    <property type="gene ID" value="HI_0833"/>
</dbReference>
<dbReference type="KEGG" id="hin:HI_0833"/>
<dbReference type="PATRIC" id="fig|71421.8.peg.874"/>
<dbReference type="eggNOG" id="COG3029">
    <property type="taxonomic scope" value="Bacteria"/>
</dbReference>
<dbReference type="HOGENOM" id="CLU_156492_0_0_6"/>
<dbReference type="OrthoDB" id="8909678at2"/>
<dbReference type="PhylomeDB" id="P44892"/>
<dbReference type="Proteomes" id="UP000000579">
    <property type="component" value="Chromosome"/>
</dbReference>
<dbReference type="GO" id="GO:0045283">
    <property type="term" value="C:fumarate reductase complex"/>
    <property type="evidence" value="ECO:0007669"/>
    <property type="project" value="UniProtKB-UniRule"/>
</dbReference>
<dbReference type="GO" id="GO:0005886">
    <property type="term" value="C:plasma membrane"/>
    <property type="evidence" value="ECO:0007669"/>
    <property type="project" value="UniProtKB-SubCell"/>
</dbReference>
<dbReference type="GO" id="GO:0000104">
    <property type="term" value="F:succinate dehydrogenase activity"/>
    <property type="evidence" value="ECO:0007669"/>
    <property type="project" value="UniProtKB-UniRule"/>
</dbReference>
<dbReference type="CDD" id="cd00546">
    <property type="entry name" value="QFR_TypeD_subunitC"/>
    <property type="match status" value="1"/>
</dbReference>
<dbReference type="Gene3D" id="1.20.1300.10">
    <property type="entry name" value="Fumarate reductase/succinate dehydrogenase, transmembrane subunit"/>
    <property type="match status" value="1"/>
</dbReference>
<dbReference type="HAMAP" id="MF_00708">
    <property type="entry name" value="Fumarate_red_C"/>
    <property type="match status" value="1"/>
</dbReference>
<dbReference type="InterPro" id="IPR003510">
    <property type="entry name" value="Fumarate_red_C"/>
</dbReference>
<dbReference type="InterPro" id="IPR034804">
    <property type="entry name" value="SQR/QFR_C/D"/>
</dbReference>
<dbReference type="NCBIfam" id="NF003445">
    <property type="entry name" value="PRK04987.1"/>
    <property type="match status" value="1"/>
</dbReference>
<dbReference type="Pfam" id="PF02300">
    <property type="entry name" value="Fumarate_red_C"/>
    <property type="match status" value="1"/>
</dbReference>
<dbReference type="PIRSF" id="PIRSF000180">
    <property type="entry name" value="FrdC"/>
    <property type="match status" value="1"/>
</dbReference>
<dbReference type="SUPFAM" id="SSF81343">
    <property type="entry name" value="Fumarate reductase respiratory complex transmembrane subunits"/>
    <property type="match status" value="1"/>
</dbReference>
<evidence type="ECO:0000255" key="1">
    <source>
        <dbReference type="HAMAP-Rule" id="MF_00708"/>
    </source>
</evidence>
<organism>
    <name type="scientific">Haemophilus influenzae (strain ATCC 51907 / DSM 11121 / KW20 / Rd)</name>
    <dbReference type="NCBI Taxonomy" id="71421"/>
    <lineage>
        <taxon>Bacteria</taxon>
        <taxon>Pseudomonadati</taxon>
        <taxon>Pseudomonadota</taxon>
        <taxon>Gammaproteobacteria</taxon>
        <taxon>Pasteurellales</taxon>
        <taxon>Pasteurellaceae</taxon>
        <taxon>Haemophilus</taxon>
    </lineage>
</organism>
<gene>
    <name evidence="1" type="primary">frdC</name>
    <name type="ordered locus">HI_0833</name>
</gene>
<comment type="function">
    <text evidence="1">Anchors the catalytic components of the fumarate reductase complex to the cell membrane, binds quinones.</text>
</comment>
<comment type="subunit">
    <text evidence="1">Part of an enzyme complex containing four subunits: a flavoprotein (FrdA), an iron-sulfur protein (FrdB), and two hydrophobic anchor proteins (FrdC and FrdD).</text>
</comment>
<comment type="subcellular location">
    <subcellularLocation>
        <location evidence="1">Cell inner membrane</location>
        <topology evidence="1">Multi-pass membrane protein</topology>
    </subcellularLocation>
</comment>
<comment type="similarity">
    <text evidence="1">Belongs to the FrdC family.</text>
</comment>
<reference key="1">
    <citation type="journal article" date="1995" name="Science">
        <title>Whole-genome random sequencing and assembly of Haemophilus influenzae Rd.</title>
        <authorList>
            <person name="Fleischmann R.D."/>
            <person name="Adams M.D."/>
            <person name="White O."/>
            <person name="Clayton R.A."/>
            <person name="Kirkness E.F."/>
            <person name="Kerlavage A.R."/>
            <person name="Bult C.J."/>
            <person name="Tomb J.-F."/>
            <person name="Dougherty B.A."/>
            <person name="Merrick J.M."/>
            <person name="McKenney K."/>
            <person name="Sutton G.G."/>
            <person name="FitzHugh W."/>
            <person name="Fields C.A."/>
            <person name="Gocayne J.D."/>
            <person name="Scott J.D."/>
            <person name="Shirley R."/>
            <person name="Liu L.-I."/>
            <person name="Glodek A."/>
            <person name="Kelley J.M."/>
            <person name="Weidman J.F."/>
            <person name="Phillips C.A."/>
            <person name="Spriggs T."/>
            <person name="Hedblom E."/>
            <person name="Cotton M.D."/>
            <person name="Utterback T.R."/>
            <person name="Hanna M.C."/>
            <person name="Nguyen D.T."/>
            <person name="Saudek D.M."/>
            <person name="Brandon R.C."/>
            <person name="Fine L.D."/>
            <person name="Fritchman J.L."/>
            <person name="Fuhrmann J.L."/>
            <person name="Geoghagen N.S.M."/>
            <person name="Gnehm C.L."/>
            <person name="McDonald L.A."/>
            <person name="Small K.V."/>
            <person name="Fraser C.M."/>
            <person name="Smith H.O."/>
            <person name="Venter J.C."/>
        </authorList>
    </citation>
    <scope>NUCLEOTIDE SEQUENCE [LARGE SCALE GENOMIC DNA]</scope>
    <source>
        <strain>ATCC 51907 / DSM 11121 / KW20 / Rd</strain>
    </source>
</reference>
<keyword id="KW-0997">Cell inner membrane</keyword>
<keyword id="KW-1003">Cell membrane</keyword>
<keyword id="KW-0472">Membrane</keyword>
<keyword id="KW-1185">Reference proteome</keyword>
<keyword id="KW-0812">Transmembrane</keyword>
<keyword id="KW-1133">Transmembrane helix</keyword>
<name>FRDC_HAEIN</name>